<gene>
    <name evidence="1" type="primary">rpsD</name>
    <name type="ordered locus">lp_2331</name>
</gene>
<evidence type="ECO:0000255" key="1">
    <source>
        <dbReference type="HAMAP-Rule" id="MF_01306"/>
    </source>
</evidence>
<evidence type="ECO:0000256" key="2">
    <source>
        <dbReference type="SAM" id="MobiDB-lite"/>
    </source>
</evidence>
<evidence type="ECO:0000305" key="3"/>
<keyword id="KW-1185">Reference proteome</keyword>
<keyword id="KW-0687">Ribonucleoprotein</keyword>
<keyword id="KW-0689">Ribosomal protein</keyword>
<keyword id="KW-0694">RNA-binding</keyword>
<keyword id="KW-0699">rRNA-binding</keyword>
<proteinExistence type="inferred from homology"/>
<name>RS4_LACPL</name>
<accession>Q88UX0</accession>
<accession>F9UQN6</accession>
<dbReference type="EMBL" id="AL935263">
    <property type="protein sequence ID" value="CCC79525.1"/>
    <property type="molecule type" value="Genomic_DNA"/>
</dbReference>
<dbReference type="RefSeq" id="WP_003641475.1">
    <property type="nucleotide sequence ID" value="NC_004567.2"/>
</dbReference>
<dbReference type="RefSeq" id="YP_004890039.1">
    <property type="nucleotide sequence ID" value="NC_004567.2"/>
</dbReference>
<dbReference type="SMR" id="Q88UX0"/>
<dbReference type="STRING" id="220668.lp_2331"/>
<dbReference type="EnsemblBacteria" id="CCC79525">
    <property type="protein sequence ID" value="CCC79525"/>
    <property type="gene ID" value="lp_2331"/>
</dbReference>
<dbReference type="GeneID" id="89669592"/>
<dbReference type="KEGG" id="lpl:lp_2331"/>
<dbReference type="PATRIC" id="fig|220668.9.peg.1970"/>
<dbReference type="eggNOG" id="COG0522">
    <property type="taxonomic scope" value="Bacteria"/>
</dbReference>
<dbReference type="HOGENOM" id="CLU_092403_0_1_9"/>
<dbReference type="OrthoDB" id="9803672at2"/>
<dbReference type="PhylomeDB" id="Q88UX0"/>
<dbReference type="Proteomes" id="UP000000432">
    <property type="component" value="Chromosome"/>
</dbReference>
<dbReference type="GO" id="GO:0015935">
    <property type="term" value="C:small ribosomal subunit"/>
    <property type="evidence" value="ECO:0007669"/>
    <property type="project" value="InterPro"/>
</dbReference>
<dbReference type="GO" id="GO:0019843">
    <property type="term" value="F:rRNA binding"/>
    <property type="evidence" value="ECO:0007669"/>
    <property type="project" value="UniProtKB-UniRule"/>
</dbReference>
<dbReference type="GO" id="GO:0003735">
    <property type="term" value="F:structural constituent of ribosome"/>
    <property type="evidence" value="ECO:0007669"/>
    <property type="project" value="InterPro"/>
</dbReference>
<dbReference type="GO" id="GO:0042274">
    <property type="term" value="P:ribosomal small subunit biogenesis"/>
    <property type="evidence" value="ECO:0007669"/>
    <property type="project" value="TreeGrafter"/>
</dbReference>
<dbReference type="GO" id="GO:0006412">
    <property type="term" value="P:translation"/>
    <property type="evidence" value="ECO:0007669"/>
    <property type="project" value="UniProtKB-UniRule"/>
</dbReference>
<dbReference type="CDD" id="cd00165">
    <property type="entry name" value="S4"/>
    <property type="match status" value="1"/>
</dbReference>
<dbReference type="FunFam" id="3.10.290.10:FF:000001">
    <property type="entry name" value="30S ribosomal protein S4"/>
    <property type="match status" value="1"/>
</dbReference>
<dbReference type="Gene3D" id="1.10.1050.10">
    <property type="entry name" value="Ribosomal Protein S4 Delta 41, Chain A, domain 1"/>
    <property type="match status" value="1"/>
</dbReference>
<dbReference type="Gene3D" id="3.10.290.10">
    <property type="entry name" value="RNA-binding S4 domain"/>
    <property type="match status" value="1"/>
</dbReference>
<dbReference type="HAMAP" id="MF_01306_B">
    <property type="entry name" value="Ribosomal_uS4_B"/>
    <property type="match status" value="1"/>
</dbReference>
<dbReference type="InterPro" id="IPR022801">
    <property type="entry name" value="Ribosomal_uS4"/>
</dbReference>
<dbReference type="InterPro" id="IPR005709">
    <property type="entry name" value="Ribosomal_uS4_bac-type"/>
</dbReference>
<dbReference type="InterPro" id="IPR018079">
    <property type="entry name" value="Ribosomal_uS4_CS"/>
</dbReference>
<dbReference type="InterPro" id="IPR001912">
    <property type="entry name" value="Ribosomal_uS4_N"/>
</dbReference>
<dbReference type="InterPro" id="IPR002942">
    <property type="entry name" value="S4_RNA-bd"/>
</dbReference>
<dbReference type="InterPro" id="IPR036986">
    <property type="entry name" value="S4_RNA-bd_sf"/>
</dbReference>
<dbReference type="NCBIfam" id="NF003717">
    <property type="entry name" value="PRK05327.1"/>
    <property type="match status" value="1"/>
</dbReference>
<dbReference type="NCBIfam" id="TIGR01017">
    <property type="entry name" value="rpsD_bact"/>
    <property type="match status" value="1"/>
</dbReference>
<dbReference type="PANTHER" id="PTHR11831">
    <property type="entry name" value="30S 40S RIBOSOMAL PROTEIN"/>
    <property type="match status" value="1"/>
</dbReference>
<dbReference type="PANTHER" id="PTHR11831:SF4">
    <property type="entry name" value="SMALL RIBOSOMAL SUBUNIT PROTEIN US4M"/>
    <property type="match status" value="1"/>
</dbReference>
<dbReference type="Pfam" id="PF00163">
    <property type="entry name" value="Ribosomal_S4"/>
    <property type="match status" value="1"/>
</dbReference>
<dbReference type="Pfam" id="PF01479">
    <property type="entry name" value="S4"/>
    <property type="match status" value="1"/>
</dbReference>
<dbReference type="SMART" id="SM01390">
    <property type="entry name" value="Ribosomal_S4"/>
    <property type="match status" value="1"/>
</dbReference>
<dbReference type="SMART" id="SM00363">
    <property type="entry name" value="S4"/>
    <property type="match status" value="1"/>
</dbReference>
<dbReference type="SUPFAM" id="SSF55174">
    <property type="entry name" value="Alpha-L RNA-binding motif"/>
    <property type="match status" value="1"/>
</dbReference>
<dbReference type="PROSITE" id="PS00632">
    <property type="entry name" value="RIBOSOMAL_S4"/>
    <property type="match status" value="1"/>
</dbReference>
<dbReference type="PROSITE" id="PS50889">
    <property type="entry name" value="S4"/>
    <property type="match status" value="1"/>
</dbReference>
<reference key="1">
    <citation type="journal article" date="2003" name="Proc. Natl. Acad. Sci. U.S.A.">
        <title>Complete genome sequence of Lactobacillus plantarum WCFS1.</title>
        <authorList>
            <person name="Kleerebezem M."/>
            <person name="Boekhorst J."/>
            <person name="van Kranenburg R."/>
            <person name="Molenaar D."/>
            <person name="Kuipers O.P."/>
            <person name="Leer R."/>
            <person name="Tarchini R."/>
            <person name="Peters S.A."/>
            <person name="Sandbrink H.M."/>
            <person name="Fiers M.W.E.J."/>
            <person name="Stiekema W."/>
            <person name="Klein Lankhorst R.M."/>
            <person name="Bron P.A."/>
            <person name="Hoffer S.M."/>
            <person name="Nierop Groot M.N."/>
            <person name="Kerkhoven R."/>
            <person name="De Vries M."/>
            <person name="Ursing B."/>
            <person name="De Vos W.M."/>
            <person name="Siezen R.J."/>
        </authorList>
    </citation>
    <scope>NUCLEOTIDE SEQUENCE [LARGE SCALE GENOMIC DNA]</scope>
    <source>
        <strain>ATCC BAA-793 / NCIMB 8826 / WCFS1</strain>
    </source>
</reference>
<reference key="2">
    <citation type="journal article" date="2012" name="J. Bacteriol.">
        <title>Complete resequencing and reannotation of the Lactobacillus plantarum WCFS1 genome.</title>
        <authorList>
            <person name="Siezen R.J."/>
            <person name="Francke C."/>
            <person name="Renckens B."/>
            <person name="Boekhorst J."/>
            <person name="Wels M."/>
            <person name="Kleerebezem M."/>
            <person name="van Hijum S.A."/>
        </authorList>
    </citation>
    <scope>NUCLEOTIDE SEQUENCE [LARGE SCALE GENOMIC DNA]</scope>
    <scope>GENOME REANNOTATION</scope>
    <source>
        <strain>ATCC BAA-793 / NCIMB 8826 / WCFS1</strain>
    </source>
</reference>
<organism>
    <name type="scientific">Lactiplantibacillus plantarum (strain ATCC BAA-793 / NCIMB 8826 / WCFS1)</name>
    <name type="common">Lactobacillus plantarum</name>
    <dbReference type="NCBI Taxonomy" id="220668"/>
    <lineage>
        <taxon>Bacteria</taxon>
        <taxon>Bacillati</taxon>
        <taxon>Bacillota</taxon>
        <taxon>Bacilli</taxon>
        <taxon>Lactobacillales</taxon>
        <taxon>Lactobacillaceae</taxon>
        <taxon>Lactiplantibacillus</taxon>
    </lineage>
</organism>
<protein>
    <recommendedName>
        <fullName evidence="1">Small ribosomal subunit protein uS4</fullName>
    </recommendedName>
    <alternativeName>
        <fullName evidence="3">30S ribosomal protein S4</fullName>
    </alternativeName>
</protein>
<comment type="function">
    <text evidence="1">One of the primary rRNA binding proteins, it binds directly to 16S rRNA where it nucleates assembly of the body of the 30S subunit.</text>
</comment>
<comment type="function">
    <text evidence="1">With S5 and S12 plays an important role in translational accuracy.</text>
</comment>
<comment type="subunit">
    <text evidence="1">Part of the 30S ribosomal subunit. Contacts protein S5. The interaction surface between S4 and S5 is involved in control of translational fidelity.</text>
</comment>
<comment type="similarity">
    <text evidence="1">Belongs to the universal ribosomal protein uS4 family.</text>
</comment>
<sequence>MSRYTGPSWKISRRLGMSLSGTGKELARRPYAPGDHGQGRRGKLSEYGTQLREKQKLRMMYGLTERQFANLFIKAGKIREGKHGVNFMILLERRLDNMVYRLGLATTRRQARQLVNHGHITVDGKRVDIPSYEVSVGQVVSVREKSKKLAVITGAVEAVVARPNFVQFDADKLEGSLTRLPEREELEADIDESLIVEYYNKL</sequence>
<feature type="chain" id="PRO_0000132398" description="Small ribosomal subunit protein uS4">
    <location>
        <begin position="1"/>
        <end position="202"/>
    </location>
</feature>
<feature type="domain" description="S4 RNA-binding" evidence="1">
    <location>
        <begin position="93"/>
        <end position="154"/>
    </location>
</feature>
<feature type="region of interest" description="Disordered" evidence="2">
    <location>
        <begin position="22"/>
        <end position="48"/>
    </location>
</feature>